<sequence>MSTDILRKIEAYKREEIAAAKARLALDELKARTRDQSAPRGFLKALEAKRAAGQFALIAEIKKASPSKGLIRPDFDPPALAKAYEEGGAACLSVLTDTPSFQGAPEFLTAARQACSLPALRKDFLFDPYQVYEARSWGADCILIIMASVDDDLAKELEDTAFALGMDALIEVHDEAEMERALKLSSRLLGVNNRNLRSFEVNLAVSERLAKMAPSDRLLVGESGIFTHEDCLRLEKSGIGTFLIGESLMRQHDVAAATRALLTGAEKL</sequence>
<feature type="chain" id="PRO_1000095852" description="Indole-3-glycerol phosphate synthase">
    <location>
        <begin position="1"/>
        <end position="268"/>
    </location>
</feature>
<keyword id="KW-0028">Amino-acid biosynthesis</keyword>
<keyword id="KW-0057">Aromatic amino acid biosynthesis</keyword>
<keyword id="KW-0210">Decarboxylase</keyword>
<keyword id="KW-0456">Lyase</keyword>
<keyword id="KW-0822">Tryptophan biosynthesis</keyword>
<comment type="catalytic activity">
    <reaction evidence="1">
        <text>1-(2-carboxyphenylamino)-1-deoxy-D-ribulose 5-phosphate + H(+) = (1S,2R)-1-C-(indol-3-yl)glycerol 3-phosphate + CO2 + H2O</text>
        <dbReference type="Rhea" id="RHEA:23476"/>
        <dbReference type="ChEBI" id="CHEBI:15377"/>
        <dbReference type="ChEBI" id="CHEBI:15378"/>
        <dbReference type="ChEBI" id="CHEBI:16526"/>
        <dbReference type="ChEBI" id="CHEBI:58613"/>
        <dbReference type="ChEBI" id="CHEBI:58866"/>
        <dbReference type="EC" id="4.1.1.48"/>
    </reaction>
</comment>
<comment type="pathway">
    <text evidence="1">Amino-acid biosynthesis; L-tryptophan biosynthesis; L-tryptophan from chorismate: step 4/5.</text>
</comment>
<comment type="similarity">
    <text evidence="1">Belongs to the TrpC family.</text>
</comment>
<dbReference type="EC" id="4.1.1.48" evidence="1"/>
<dbReference type="EMBL" id="CP000887">
    <property type="protein sequence ID" value="ACD72588.1"/>
    <property type="molecule type" value="Genomic_DNA"/>
</dbReference>
<dbReference type="RefSeq" id="WP_002964269.1">
    <property type="nucleotide sequence ID" value="NC_010742.1"/>
</dbReference>
<dbReference type="SMR" id="B2S5Z1"/>
<dbReference type="GeneID" id="93016523"/>
<dbReference type="KEGG" id="bmc:BAbS19_I10810"/>
<dbReference type="HOGENOM" id="CLU_034247_2_0_5"/>
<dbReference type="UniPathway" id="UPA00035">
    <property type="reaction ID" value="UER00043"/>
</dbReference>
<dbReference type="Proteomes" id="UP000002565">
    <property type="component" value="Chromosome 1"/>
</dbReference>
<dbReference type="GO" id="GO:0004425">
    <property type="term" value="F:indole-3-glycerol-phosphate synthase activity"/>
    <property type="evidence" value="ECO:0007669"/>
    <property type="project" value="UniProtKB-UniRule"/>
</dbReference>
<dbReference type="GO" id="GO:0004640">
    <property type="term" value="F:phosphoribosylanthranilate isomerase activity"/>
    <property type="evidence" value="ECO:0007669"/>
    <property type="project" value="TreeGrafter"/>
</dbReference>
<dbReference type="GO" id="GO:0000162">
    <property type="term" value="P:L-tryptophan biosynthetic process"/>
    <property type="evidence" value="ECO:0007669"/>
    <property type="project" value="UniProtKB-UniRule"/>
</dbReference>
<dbReference type="CDD" id="cd00331">
    <property type="entry name" value="IGPS"/>
    <property type="match status" value="1"/>
</dbReference>
<dbReference type="FunFam" id="3.20.20.70:FF:000024">
    <property type="entry name" value="Indole-3-glycerol phosphate synthase"/>
    <property type="match status" value="1"/>
</dbReference>
<dbReference type="Gene3D" id="3.20.20.70">
    <property type="entry name" value="Aldolase class I"/>
    <property type="match status" value="1"/>
</dbReference>
<dbReference type="HAMAP" id="MF_00134_B">
    <property type="entry name" value="IGPS_B"/>
    <property type="match status" value="1"/>
</dbReference>
<dbReference type="InterPro" id="IPR013785">
    <property type="entry name" value="Aldolase_TIM"/>
</dbReference>
<dbReference type="InterPro" id="IPR045186">
    <property type="entry name" value="Indole-3-glycerol_P_synth"/>
</dbReference>
<dbReference type="InterPro" id="IPR013798">
    <property type="entry name" value="Indole-3-glycerol_P_synth_dom"/>
</dbReference>
<dbReference type="InterPro" id="IPR001468">
    <property type="entry name" value="Indole-3-GlycerolPSynthase_CS"/>
</dbReference>
<dbReference type="InterPro" id="IPR011060">
    <property type="entry name" value="RibuloseP-bd_barrel"/>
</dbReference>
<dbReference type="NCBIfam" id="NF001370">
    <property type="entry name" value="PRK00278.1-2"/>
    <property type="match status" value="1"/>
</dbReference>
<dbReference type="NCBIfam" id="NF001373">
    <property type="entry name" value="PRK00278.1-6"/>
    <property type="match status" value="1"/>
</dbReference>
<dbReference type="NCBIfam" id="NF001377">
    <property type="entry name" value="PRK00278.2-4"/>
    <property type="match status" value="1"/>
</dbReference>
<dbReference type="PANTHER" id="PTHR22854:SF2">
    <property type="entry name" value="INDOLE-3-GLYCEROL-PHOSPHATE SYNTHASE"/>
    <property type="match status" value="1"/>
</dbReference>
<dbReference type="PANTHER" id="PTHR22854">
    <property type="entry name" value="TRYPTOPHAN BIOSYNTHESIS PROTEIN"/>
    <property type="match status" value="1"/>
</dbReference>
<dbReference type="Pfam" id="PF00218">
    <property type="entry name" value="IGPS"/>
    <property type="match status" value="1"/>
</dbReference>
<dbReference type="SUPFAM" id="SSF51366">
    <property type="entry name" value="Ribulose-phoshate binding barrel"/>
    <property type="match status" value="1"/>
</dbReference>
<dbReference type="PROSITE" id="PS00614">
    <property type="entry name" value="IGPS"/>
    <property type="match status" value="1"/>
</dbReference>
<gene>
    <name evidence="1" type="primary">trpC</name>
    <name type="ordered locus">BAbS19_I10810</name>
</gene>
<organism>
    <name type="scientific">Brucella abortus (strain S19)</name>
    <dbReference type="NCBI Taxonomy" id="430066"/>
    <lineage>
        <taxon>Bacteria</taxon>
        <taxon>Pseudomonadati</taxon>
        <taxon>Pseudomonadota</taxon>
        <taxon>Alphaproteobacteria</taxon>
        <taxon>Hyphomicrobiales</taxon>
        <taxon>Brucellaceae</taxon>
        <taxon>Brucella/Ochrobactrum group</taxon>
        <taxon>Brucella</taxon>
    </lineage>
</organism>
<name>TRPC_BRUA1</name>
<evidence type="ECO:0000255" key="1">
    <source>
        <dbReference type="HAMAP-Rule" id="MF_00134"/>
    </source>
</evidence>
<accession>B2S5Z1</accession>
<proteinExistence type="inferred from homology"/>
<protein>
    <recommendedName>
        <fullName evidence="1">Indole-3-glycerol phosphate synthase</fullName>
        <shortName evidence="1">IGPS</shortName>
        <ecNumber evidence="1">4.1.1.48</ecNumber>
    </recommendedName>
</protein>
<reference key="1">
    <citation type="journal article" date="2008" name="PLoS ONE">
        <title>Genome sequence of Brucella abortus vaccine strain S19 compared to virulent strains yields candidate virulence genes.</title>
        <authorList>
            <person name="Crasta O.R."/>
            <person name="Folkerts O."/>
            <person name="Fei Z."/>
            <person name="Mane S.P."/>
            <person name="Evans C."/>
            <person name="Martino-Catt S."/>
            <person name="Bricker B."/>
            <person name="Yu G."/>
            <person name="Du L."/>
            <person name="Sobral B.W."/>
        </authorList>
    </citation>
    <scope>NUCLEOTIDE SEQUENCE [LARGE SCALE GENOMIC DNA]</scope>
    <source>
        <strain>S19</strain>
    </source>
</reference>